<comment type="function">
    <text evidence="1">Specifically methylates the N7 position of guanine in position 527 of 16S rRNA.</text>
</comment>
<comment type="catalytic activity">
    <reaction evidence="1">
        <text>guanosine(527) in 16S rRNA + S-adenosyl-L-methionine = N(7)-methylguanosine(527) in 16S rRNA + S-adenosyl-L-homocysteine</text>
        <dbReference type="Rhea" id="RHEA:42732"/>
        <dbReference type="Rhea" id="RHEA-COMP:10209"/>
        <dbReference type="Rhea" id="RHEA-COMP:10210"/>
        <dbReference type="ChEBI" id="CHEBI:57856"/>
        <dbReference type="ChEBI" id="CHEBI:59789"/>
        <dbReference type="ChEBI" id="CHEBI:74269"/>
        <dbReference type="ChEBI" id="CHEBI:74480"/>
        <dbReference type="EC" id="2.1.1.170"/>
    </reaction>
</comment>
<comment type="subcellular location">
    <subcellularLocation>
        <location evidence="1">Cytoplasm</location>
    </subcellularLocation>
</comment>
<comment type="similarity">
    <text evidence="1">Belongs to the methyltransferase superfamily. RNA methyltransferase RsmG family.</text>
</comment>
<proteinExistence type="inferred from homology"/>
<gene>
    <name evidence="1" type="primary">rsmG</name>
    <name type="ordered locus">Bmul_0094</name>
    <name type="ordered locus">BMULJ_03171</name>
</gene>
<protein>
    <recommendedName>
        <fullName evidence="1">Ribosomal RNA small subunit methyltransferase G</fullName>
        <ecNumber evidence="1">2.1.1.170</ecNumber>
    </recommendedName>
    <alternativeName>
        <fullName evidence="1">16S rRNA 7-methylguanosine methyltransferase</fullName>
        <shortName evidence="1">16S rRNA m7G methyltransferase</shortName>
    </alternativeName>
</protein>
<sequence>MTARRAPAVNRDVLERMLVDGAASLDVALSDTQRNRLLDYVALLGKWNAVYNLTAIRDPQQMLIQHILDSLSIVPHLRGRASARVLDVGSGGGLPGLVLAIVEPDWQVTLNDIVQKKSAFQTQTRAELKLTNLSVVTGRVETLRPGVEVPEKFDIIVSRAFADLSDFVKLARHLVAPGGSIWAMKGVHPDDEIARLPEGSRVKQTMRLAVPMLDAERHLIEVAVDEAI</sequence>
<organism>
    <name type="scientific">Burkholderia multivorans (strain ATCC 17616 / 249)</name>
    <dbReference type="NCBI Taxonomy" id="395019"/>
    <lineage>
        <taxon>Bacteria</taxon>
        <taxon>Pseudomonadati</taxon>
        <taxon>Pseudomonadota</taxon>
        <taxon>Betaproteobacteria</taxon>
        <taxon>Burkholderiales</taxon>
        <taxon>Burkholderiaceae</taxon>
        <taxon>Burkholderia</taxon>
        <taxon>Burkholderia cepacia complex</taxon>
    </lineage>
</organism>
<evidence type="ECO:0000255" key="1">
    <source>
        <dbReference type="HAMAP-Rule" id="MF_00074"/>
    </source>
</evidence>
<accession>A9AJF2</accession>
<feature type="chain" id="PRO_1000092618" description="Ribosomal RNA small subunit methyltransferase G">
    <location>
        <begin position="1"/>
        <end position="228"/>
    </location>
</feature>
<feature type="binding site" evidence="1">
    <location>
        <position position="89"/>
    </location>
    <ligand>
        <name>S-adenosyl-L-methionine</name>
        <dbReference type="ChEBI" id="CHEBI:59789"/>
    </ligand>
</feature>
<feature type="binding site" evidence="1">
    <location>
        <position position="94"/>
    </location>
    <ligand>
        <name>S-adenosyl-L-methionine</name>
        <dbReference type="ChEBI" id="CHEBI:59789"/>
    </ligand>
</feature>
<feature type="binding site" evidence="1">
    <location>
        <begin position="140"/>
        <end position="141"/>
    </location>
    <ligand>
        <name>S-adenosyl-L-methionine</name>
        <dbReference type="ChEBI" id="CHEBI:59789"/>
    </ligand>
</feature>
<feature type="binding site" evidence="1">
    <location>
        <position position="159"/>
    </location>
    <ligand>
        <name>S-adenosyl-L-methionine</name>
        <dbReference type="ChEBI" id="CHEBI:59789"/>
    </ligand>
</feature>
<name>RSMG_BURM1</name>
<dbReference type="EC" id="2.1.1.170" evidence="1"/>
<dbReference type="EMBL" id="CP000868">
    <property type="protein sequence ID" value="ABX13789.1"/>
    <property type="molecule type" value="Genomic_DNA"/>
</dbReference>
<dbReference type="EMBL" id="AP009385">
    <property type="protein sequence ID" value="BAG45045.1"/>
    <property type="molecule type" value="Genomic_DNA"/>
</dbReference>
<dbReference type="RefSeq" id="WP_012212471.1">
    <property type="nucleotide sequence ID" value="NC_010084.1"/>
</dbReference>
<dbReference type="SMR" id="A9AJF2"/>
<dbReference type="STRING" id="395019.BMULJ_03171"/>
<dbReference type="KEGG" id="bmj:BMULJ_03171"/>
<dbReference type="KEGG" id="bmu:Bmul_0094"/>
<dbReference type="eggNOG" id="COG0357">
    <property type="taxonomic scope" value="Bacteria"/>
</dbReference>
<dbReference type="HOGENOM" id="CLU_065341_2_0_4"/>
<dbReference type="Proteomes" id="UP000008815">
    <property type="component" value="Chromosome 1"/>
</dbReference>
<dbReference type="GO" id="GO:0005829">
    <property type="term" value="C:cytosol"/>
    <property type="evidence" value="ECO:0007669"/>
    <property type="project" value="TreeGrafter"/>
</dbReference>
<dbReference type="GO" id="GO:0070043">
    <property type="term" value="F:rRNA (guanine-N7-)-methyltransferase activity"/>
    <property type="evidence" value="ECO:0007669"/>
    <property type="project" value="UniProtKB-UniRule"/>
</dbReference>
<dbReference type="CDD" id="cd02440">
    <property type="entry name" value="AdoMet_MTases"/>
    <property type="match status" value="1"/>
</dbReference>
<dbReference type="Gene3D" id="3.40.50.150">
    <property type="entry name" value="Vaccinia Virus protein VP39"/>
    <property type="match status" value="1"/>
</dbReference>
<dbReference type="HAMAP" id="MF_00074">
    <property type="entry name" value="16SrRNA_methyltr_G"/>
    <property type="match status" value="1"/>
</dbReference>
<dbReference type="InterPro" id="IPR003682">
    <property type="entry name" value="rRNA_ssu_MeTfrase_G"/>
</dbReference>
<dbReference type="InterPro" id="IPR029063">
    <property type="entry name" value="SAM-dependent_MTases_sf"/>
</dbReference>
<dbReference type="NCBIfam" id="TIGR00138">
    <property type="entry name" value="rsmG_gidB"/>
    <property type="match status" value="1"/>
</dbReference>
<dbReference type="PANTHER" id="PTHR31760">
    <property type="entry name" value="S-ADENOSYL-L-METHIONINE-DEPENDENT METHYLTRANSFERASES SUPERFAMILY PROTEIN"/>
    <property type="match status" value="1"/>
</dbReference>
<dbReference type="PANTHER" id="PTHR31760:SF0">
    <property type="entry name" value="S-ADENOSYL-L-METHIONINE-DEPENDENT METHYLTRANSFERASES SUPERFAMILY PROTEIN"/>
    <property type="match status" value="1"/>
</dbReference>
<dbReference type="Pfam" id="PF02527">
    <property type="entry name" value="GidB"/>
    <property type="match status" value="1"/>
</dbReference>
<dbReference type="PIRSF" id="PIRSF003078">
    <property type="entry name" value="GidB"/>
    <property type="match status" value="1"/>
</dbReference>
<dbReference type="SUPFAM" id="SSF53335">
    <property type="entry name" value="S-adenosyl-L-methionine-dependent methyltransferases"/>
    <property type="match status" value="1"/>
</dbReference>
<reference key="1">
    <citation type="submission" date="2007-10" db="EMBL/GenBank/DDBJ databases">
        <title>Complete sequence of chromosome 1 of Burkholderia multivorans ATCC 17616.</title>
        <authorList>
            <person name="Copeland A."/>
            <person name="Lucas S."/>
            <person name="Lapidus A."/>
            <person name="Barry K."/>
            <person name="Glavina del Rio T."/>
            <person name="Dalin E."/>
            <person name="Tice H."/>
            <person name="Pitluck S."/>
            <person name="Chain P."/>
            <person name="Malfatti S."/>
            <person name="Shin M."/>
            <person name="Vergez L."/>
            <person name="Schmutz J."/>
            <person name="Larimer F."/>
            <person name="Land M."/>
            <person name="Hauser L."/>
            <person name="Kyrpides N."/>
            <person name="Kim E."/>
            <person name="Tiedje J."/>
            <person name="Richardson P."/>
        </authorList>
    </citation>
    <scope>NUCLEOTIDE SEQUENCE [LARGE SCALE GENOMIC DNA]</scope>
    <source>
        <strain>ATCC 17616 / 249</strain>
    </source>
</reference>
<reference key="2">
    <citation type="submission" date="2007-04" db="EMBL/GenBank/DDBJ databases">
        <title>Complete genome sequence of Burkholderia multivorans ATCC 17616.</title>
        <authorList>
            <person name="Ohtsubo Y."/>
            <person name="Yamashita A."/>
            <person name="Kurokawa K."/>
            <person name="Takami H."/>
            <person name="Yuhara S."/>
            <person name="Nishiyama E."/>
            <person name="Endo R."/>
            <person name="Miyazaki R."/>
            <person name="Ono A."/>
            <person name="Yano K."/>
            <person name="Ito M."/>
            <person name="Sota M."/>
            <person name="Yuji N."/>
            <person name="Hattori M."/>
            <person name="Tsuda M."/>
        </authorList>
    </citation>
    <scope>NUCLEOTIDE SEQUENCE [LARGE SCALE GENOMIC DNA]</scope>
    <source>
        <strain>ATCC 17616 / 249</strain>
    </source>
</reference>
<keyword id="KW-0963">Cytoplasm</keyword>
<keyword id="KW-0489">Methyltransferase</keyword>
<keyword id="KW-1185">Reference proteome</keyword>
<keyword id="KW-0698">rRNA processing</keyword>
<keyword id="KW-0949">S-adenosyl-L-methionine</keyword>
<keyword id="KW-0808">Transferase</keyword>